<proteinExistence type="inferred from homology"/>
<sequence>MRNFDLSPLYRSAIGFDRLFNHLENNQSQSNGGYPPYNVELVDENHYRIAIAVAGFAESELEITAQDNLLVVKGAHADEQKERTYLYQGIAERNFERKFQLAENIHVRGANLVNGLLYIDLERVIPEAKKPRRIEIN</sequence>
<evidence type="ECO:0000255" key="1">
    <source>
        <dbReference type="HAMAP-Rule" id="MF_02000"/>
    </source>
</evidence>
<evidence type="ECO:0000255" key="2">
    <source>
        <dbReference type="PROSITE-ProRule" id="PRU00285"/>
    </source>
</evidence>
<reference key="1">
    <citation type="journal article" date="2009" name="PLoS Genet.">
        <title>Organised genome dynamics in the Escherichia coli species results in highly diverse adaptive paths.</title>
        <authorList>
            <person name="Touchon M."/>
            <person name="Hoede C."/>
            <person name="Tenaillon O."/>
            <person name="Barbe V."/>
            <person name="Baeriswyl S."/>
            <person name="Bidet P."/>
            <person name="Bingen E."/>
            <person name="Bonacorsi S."/>
            <person name="Bouchier C."/>
            <person name="Bouvet O."/>
            <person name="Calteau A."/>
            <person name="Chiapello H."/>
            <person name="Clermont O."/>
            <person name="Cruveiller S."/>
            <person name="Danchin A."/>
            <person name="Diard M."/>
            <person name="Dossat C."/>
            <person name="Karoui M.E."/>
            <person name="Frapy E."/>
            <person name="Garry L."/>
            <person name="Ghigo J.M."/>
            <person name="Gilles A.M."/>
            <person name="Johnson J."/>
            <person name="Le Bouguenec C."/>
            <person name="Lescat M."/>
            <person name="Mangenot S."/>
            <person name="Martinez-Jehanne V."/>
            <person name="Matic I."/>
            <person name="Nassif X."/>
            <person name="Oztas S."/>
            <person name="Petit M.A."/>
            <person name="Pichon C."/>
            <person name="Rouy Z."/>
            <person name="Ruf C.S."/>
            <person name="Schneider D."/>
            <person name="Tourret J."/>
            <person name="Vacherie B."/>
            <person name="Vallenet D."/>
            <person name="Medigue C."/>
            <person name="Rocha E.P.C."/>
            <person name="Denamur E."/>
        </authorList>
    </citation>
    <scope>NUCLEOTIDE SEQUENCE [LARGE SCALE GENOMIC DNA]</scope>
    <source>
        <strain>55989 / EAEC</strain>
    </source>
</reference>
<comment type="function">
    <text evidence="1">Associates with aggregated proteins, together with IbpB, to stabilize and protect them from irreversible denaturation and extensive proteolysis during heat shock and oxidative stress. Aggregated proteins bound to the IbpAB complex are more efficiently refolded and reactivated by the ATP-dependent chaperone systems ClpB and DnaK/DnaJ/GrpE. Its activity is ATP-independent.</text>
</comment>
<comment type="subunit">
    <text evidence="1">Monomer. Forms homomultimers of about 100-150 subunits at optimal growth temperatures. Conformation changes to monomers at high temperatures or high ionic concentrations.</text>
</comment>
<comment type="subcellular location">
    <subcellularLocation>
        <location evidence="1">Cytoplasm</location>
    </subcellularLocation>
</comment>
<comment type="similarity">
    <text evidence="1 2">Belongs to the small heat shock protein (HSP20) family.</text>
</comment>
<protein>
    <recommendedName>
        <fullName evidence="1">Small heat shock protein IbpA</fullName>
    </recommendedName>
    <alternativeName>
        <fullName evidence="1">16 kDa heat shock protein A</fullName>
    </alternativeName>
</protein>
<keyword id="KW-0143">Chaperone</keyword>
<keyword id="KW-0963">Cytoplasm</keyword>
<keyword id="KW-1185">Reference proteome</keyword>
<keyword id="KW-0346">Stress response</keyword>
<organism>
    <name type="scientific">Escherichia coli (strain 55989 / EAEC)</name>
    <dbReference type="NCBI Taxonomy" id="585055"/>
    <lineage>
        <taxon>Bacteria</taxon>
        <taxon>Pseudomonadati</taxon>
        <taxon>Pseudomonadota</taxon>
        <taxon>Gammaproteobacteria</taxon>
        <taxon>Enterobacterales</taxon>
        <taxon>Enterobacteriaceae</taxon>
        <taxon>Escherichia</taxon>
    </lineage>
</organism>
<gene>
    <name evidence="1" type="primary">ibpA</name>
    <name type="ordered locus">EC55989_4156</name>
</gene>
<feature type="chain" id="PRO_1000189078" description="Small heat shock protein IbpA">
    <location>
        <begin position="1"/>
        <end position="137"/>
    </location>
</feature>
<feature type="domain" description="sHSP" evidence="2">
    <location>
        <begin position="28"/>
        <end position="137"/>
    </location>
</feature>
<accession>B7L831</accession>
<name>IBPA_ECO55</name>
<dbReference type="EMBL" id="CU928145">
    <property type="protein sequence ID" value="CAV00733.1"/>
    <property type="molecule type" value="Genomic_DNA"/>
</dbReference>
<dbReference type="RefSeq" id="WP_001243437.1">
    <property type="nucleotide sequence ID" value="NZ_CP028304.1"/>
</dbReference>
<dbReference type="SMR" id="B7L831"/>
<dbReference type="GeneID" id="93778428"/>
<dbReference type="KEGG" id="eck:EC55989_4156"/>
<dbReference type="HOGENOM" id="CLU_046737_4_2_6"/>
<dbReference type="Proteomes" id="UP000000746">
    <property type="component" value="Chromosome"/>
</dbReference>
<dbReference type="GO" id="GO:0005737">
    <property type="term" value="C:cytoplasm"/>
    <property type="evidence" value="ECO:0007669"/>
    <property type="project" value="UniProtKB-SubCell"/>
</dbReference>
<dbReference type="GO" id="GO:0050821">
    <property type="term" value="P:protein stabilization"/>
    <property type="evidence" value="ECO:0007669"/>
    <property type="project" value="UniProtKB-UniRule"/>
</dbReference>
<dbReference type="CDD" id="cd06470">
    <property type="entry name" value="ACD_IbpA-B_like"/>
    <property type="match status" value="1"/>
</dbReference>
<dbReference type="FunFam" id="2.60.40.790:FF:000002">
    <property type="entry name" value="Small heat shock protein IbpA"/>
    <property type="match status" value="1"/>
</dbReference>
<dbReference type="Gene3D" id="2.60.40.790">
    <property type="match status" value="1"/>
</dbReference>
<dbReference type="HAMAP" id="MF_02000">
    <property type="entry name" value="HSP20_IbpA"/>
    <property type="match status" value="1"/>
</dbReference>
<dbReference type="InterPro" id="IPR002068">
    <property type="entry name" value="A-crystallin/Hsp20_dom"/>
</dbReference>
<dbReference type="InterPro" id="IPR037913">
    <property type="entry name" value="ACD_IbpA/B"/>
</dbReference>
<dbReference type="InterPro" id="IPR008978">
    <property type="entry name" value="HSP20-like_chaperone"/>
</dbReference>
<dbReference type="InterPro" id="IPR023728">
    <property type="entry name" value="HSP20_IbpA"/>
</dbReference>
<dbReference type="NCBIfam" id="NF008013">
    <property type="entry name" value="PRK10743.1"/>
    <property type="match status" value="1"/>
</dbReference>
<dbReference type="PANTHER" id="PTHR47062">
    <property type="match status" value="1"/>
</dbReference>
<dbReference type="PANTHER" id="PTHR47062:SF1">
    <property type="entry name" value="SMALL HEAT SHOCK PROTEIN IBPA"/>
    <property type="match status" value="1"/>
</dbReference>
<dbReference type="Pfam" id="PF00011">
    <property type="entry name" value="HSP20"/>
    <property type="match status" value="1"/>
</dbReference>
<dbReference type="SUPFAM" id="SSF49764">
    <property type="entry name" value="HSP20-like chaperones"/>
    <property type="match status" value="1"/>
</dbReference>
<dbReference type="PROSITE" id="PS01031">
    <property type="entry name" value="SHSP"/>
    <property type="match status" value="1"/>
</dbReference>